<sequence length="424" mass="47355">MFVDKARIFVKSGDGGDGAVSFRREKYIPLGGPDGGDGGEGGDVILVVDPNMTTLLDFKYKRKYVSERGQNGQGAKCYGRDGKDLYIKVPMGTIIRDVETDKIMADLAHKDDKFVIVKGGRGGKGNVKFCTPTRQAPNFAQPGMPGEERWISLELKLLADVGLIGFPNVGKSTLLSVASKARPKIANYHFTTITPNLGVVDVSGISSFVMADIPGIIEGASEGVGLGFEFLRHIERTRLLVHVVDISGSEGRDPLEDFLKINEELKKYNIKLWDRPQIVAANKADMVYDDDQFNKFREELNKLGYKNVFKISAATRMGVEDLLKECARVLSTIPVTDMEIPEEERFVPEDKHFTYTIRKEGDTYIVEGTFVDRLLASVNVNEPDSFRYFHKVLRNKGVMAELEEMGIKDGDMVRLNDFEFEFLK</sequence>
<accession>Q97JL4</accession>
<organism>
    <name type="scientific">Clostridium acetobutylicum (strain ATCC 824 / DSM 792 / JCM 1419 / IAM 19013 / LMG 5710 / NBRC 13948 / NRRL B-527 / VKM B-1787 / 2291 / W)</name>
    <dbReference type="NCBI Taxonomy" id="272562"/>
    <lineage>
        <taxon>Bacteria</taxon>
        <taxon>Bacillati</taxon>
        <taxon>Bacillota</taxon>
        <taxon>Clostridia</taxon>
        <taxon>Eubacteriales</taxon>
        <taxon>Clostridiaceae</taxon>
        <taxon>Clostridium</taxon>
    </lineage>
</organism>
<keyword id="KW-0963">Cytoplasm</keyword>
<keyword id="KW-0342">GTP-binding</keyword>
<keyword id="KW-0378">Hydrolase</keyword>
<keyword id="KW-0460">Magnesium</keyword>
<keyword id="KW-0479">Metal-binding</keyword>
<keyword id="KW-0547">Nucleotide-binding</keyword>
<keyword id="KW-1185">Reference proteome</keyword>
<name>OBG_CLOAB</name>
<proteinExistence type="inferred from homology"/>
<reference key="1">
    <citation type="journal article" date="2001" name="J. Bacteriol.">
        <title>Genome sequence and comparative analysis of the solvent-producing bacterium Clostridium acetobutylicum.</title>
        <authorList>
            <person name="Noelling J."/>
            <person name="Breton G."/>
            <person name="Omelchenko M.V."/>
            <person name="Makarova K.S."/>
            <person name="Zeng Q."/>
            <person name="Gibson R."/>
            <person name="Lee H.M."/>
            <person name="Dubois J."/>
            <person name="Qiu D."/>
            <person name="Hitti J."/>
            <person name="Wolf Y.I."/>
            <person name="Tatusov R.L."/>
            <person name="Sabathe F."/>
            <person name="Doucette-Stamm L.A."/>
            <person name="Soucaille P."/>
            <person name="Daly M.J."/>
            <person name="Bennett G.N."/>
            <person name="Koonin E.V."/>
            <person name="Smith D.R."/>
        </authorList>
    </citation>
    <scope>NUCLEOTIDE SEQUENCE [LARGE SCALE GENOMIC DNA]</scope>
    <source>
        <strain>ATCC 824 / DSM 792 / JCM 1419 / IAM 19013 / LMG 5710 / NBRC 13948 / NRRL B-527 / VKM B-1787 / 2291 / W</strain>
    </source>
</reference>
<gene>
    <name evidence="1" type="primary">obg</name>
    <name type="ordered locus">CA_C1260</name>
</gene>
<dbReference type="EC" id="3.6.5.-" evidence="1"/>
<dbReference type="EMBL" id="AE001437">
    <property type="protein sequence ID" value="AAK79231.1"/>
    <property type="molecule type" value="Genomic_DNA"/>
</dbReference>
<dbReference type="PIR" id="D97055">
    <property type="entry name" value="D97055"/>
</dbReference>
<dbReference type="RefSeq" id="NP_347891.1">
    <property type="nucleotide sequence ID" value="NC_003030.1"/>
</dbReference>
<dbReference type="SMR" id="Q97JL4"/>
<dbReference type="STRING" id="272562.CA_C1260"/>
<dbReference type="KEGG" id="cac:CA_C1260"/>
<dbReference type="PATRIC" id="fig|272562.8.peg.1460"/>
<dbReference type="eggNOG" id="COG0536">
    <property type="taxonomic scope" value="Bacteria"/>
</dbReference>
<dbReference type="HOGENOM" id="CLU_011747_2_1_9"/>
<dbReference type="OrthoDB" id="9807318at2"/>
<dbReference type="Proteomes" id="UP000000814">
    <property type="component" value="Chromosome"/>
</dbReference>
<dbReference type="GO" id="GO:0005737">
    <property type="term" value="C:cytoplasm"/>
    <property type="evidence" value="ECO:0007669"/>
    <property type="project" value="UniProtKB-SubCell"/>
</dbReference>
<dbReference type="GO" id="GO:0005525">
    <property type="term" value="F:GTP binding"/>
    <property type="evidence" value="ECO:0007669"/>
    <property type="project" value="UniProtKB-UniRule"/>
</dbReference>
<dbReference type="GO" id="GO:0003924">
    <property type="term" value="F:GTPase activity"/>
    <property type="evidence" value="ECO:0007669"/>
    <property type="project" value="UniProtKB-UniRule"/>
</dbReference>
<dbReference type="GO" id="GO:0000287">
    <property type="term" value="F:magnesium ion binding"/>
    <property type="evidence" value="ECO:0007669"/>
    <property type="project" value="InterPro"/>
</dbReference>
<dbReference type="GO" id="GO:0042254">
    <property type="term" value="P:ribosome biogenesis"/>
    <property type="evidence" value="ECO:0007669"/>
    <property type="project" value="UniProtKB-UniRule"/>
</dbReference>
<dbReference type="CDD" id="cd01898">
    <property type="entry name" value="Obg"/>
    <property type="match status" value="1"/>
</dbReference>
<dbReference type="FunFam" id="2.70.210.12:FF:000001">
    <property type="entry name" value="GTPase Obg"/>
    <property type="match status" value="1"/>
</dbReference>
<dbReference type="Gene3D" id="3.30.300.350">
    <property type="entry name" value="GTP-binding protein OBG, C-terminal domain"/>
    <property type="match status" value="1"/>
</dbReference>
<dbReference type="Gene3D" id="2.70.210.12">
    <property type="entry name" value="GTP1/OBG domain"/>
    <property type="match status" value="1"/>
</dbReference>
<dbReference type="Gene3D" id="3.40.50.300">
    <property type="entry name" value="P-loop containing nucleotide triphosphate hydrolases"/>
    <property type="match status" value="1"/>
</dbReference>
<dbReference type="HAMAP" id="MF_01454">
    <property type="entry name" value="GTPase_Obg"/>
    <property type="match status" value="1"/>
</dbReference>
<dbReference type="InterPro" id="IPR031167">
    <property type="entry name" value="G_OBG"/>
</dbReference>
<dbReference type="InterPro" id="IPR006073">
    <property type="entry name" value="GTP-bd"/>
</dbReference>
<dbReference type="InterPro" id="IPR014100">
    <property type="entry name" value="GTP-bd_Obg/CgtA"/>
</dbReference>
<dbReference type="InterPro" id="IPR036346">
    <property type="entry name" value="GTP-bd_prot_GTP1/OBG_C_sf"/>
</dbReference>
<dbReference type="InterPro" id="IPR006074">
    <property type="entry name" value="GTP1-OBG_CS"/>
</dbReference>
<dbReference type="InterPro" id="IPR006169">
    <property type="entry name" value="GTP1_OBG_dom"/>
</dbReference>
<dbReference type="InterPro" id="IPR036726">
    <property type="entry name" value="GTP1_OBG_dom_sf"/>
</dbReference>
<dbReference type="InterPro" id="IPR045086">
    <property type="entry name" value="OBG_GTPase"/>
</dbReference>
<dbReference type="InterPro" id="IPR015349">
    <property type="entry name" value="OCT_dom"/>
</dbReference>
<dbReference type="InterPro" id="IPR027417">
    <property type="entry name" value="P-loop_NTPase"/>
</dbReference>
<dbReference type="InterPro" id="IPR005225">
    <property type="entry name" value="Small_GTP-bd"/>
</dbReference>
<dbReference type="NCBIfam" id="TIGR02729">
    <property type="entry name" value="Obg_CgtA"/>
    <property type="match status" value="1"/>
</dbReference>
<dbReference type="NCBIfam" id="TIGR03595">
    <property type="entry name" value="Obg_CgtA_exten"/>
    <property type="match status" value="1"/>
</dbReference>
<dbReference type="NCBIfam" id="NF008954">
    <property type="entry name" value="PRK12296.1"/>
    <property type="match status" value="1"/>
</dbReference>
<dbReference type="NCBIfam" id="NF008955">
    <property type="entry name" value="PRK12297.1"/>
    <property type="match status" value="1"/>
</dbReference>
<dbReference type="NCBIfam" id="NF008956">
    <property type="entry name" value="PRK12299.1"/>
    <property type="match status" value="1"/>
</dbReference>
<dbReference type="NCBIfam" id="TIGR00231">
    <property type="entry name" value="small_GTP"/>
    <property type="match status" value="1"/>
</dbReference>
<dbReference type="PANTHER" id="PTHR11702">
    <property type="entry name" value="DEVELOPMENTALLY REGULATED GTP-BINDING PROTEIN-RELATED"/>
    <property type="match status" value="1"/>
</dbReference>
<dbReference type="PANTHER" id="PTHR11702:SF31">
    <property type="entry name" value="MITOCHONDRIAL RIBOSOME-ASSOCIATED GTPASE 2"/>
    <property type="match status" value="1"/>
</dbReference>
<dbReference type="Pfam" id="PF09269">
    <property type="entry name" value="DUF1967"/>
    <property type="match status" value="1"/>
</dbReference>
<dbReference type="Pfam" id="PF01018">
    <property type="entry name" value="GTP1_OBG"/>
    <property type="match status" value="1"/>
</dbReference>
<dbReference type="Pfam" id="PF01926">
    <property type="entry name" value="MMR_HSR1"/>
    <property type="match status" value="1"/>
</dbReference>
<dbReference type="PRINTS" id="PR00326">
    <property type="entry name" value="GTP1OBG"/>
</dbReference>
<dbReference type="SUPFAM" id="SSF102741">
    <property type="entry name" value="Obg GTP-binding protein C-terminal domain"/>
    <property type="match status" value="1"/>
</dbReference>
<dbReference type="SUPFAM" id="SSF82051">
    <property type="entry name" value="Obg GTP-binding protein N-terminal domain"/>
    <property type="match status" value="1"/>
</dbReference>
<dbReference type="SUPFAM" id="SSF52540">
    <property type="entry name" value="P-loop containing nucleoside triphosphate hydrolases"/>
    <property type="match status" value="1"/>
</dbReference>
<dbReference type="PROSITE" id="PS51710">
    <property type="entry name" value="G_OBG"/>
    <property type="match status" value="1"/>
</dbReference>
<dbReference type="PROSITE" id="PS00905">
    <property type="entry name" value="GTP1_OBG"/>
    <property type="match status" value="1"/>
</dbReference>
<dbReference type="PROSITE" id="PS51883">
    <property type="entry name" value="OBG"/>
    <property type="match status" value="1"/>
</dbReference>
<dbReference type="PROSITE" id="PS51881">
    <property type="entry name" value="OCT"/>
    <property type="match status" value="1"/>
</dbReference>
<protein>
    <recommendedName>
        <fullName evidence="1">GTPase Obg</fullName>
        <ecNumber evidence="1">3.6.5.-</ecNumber>
    </recommendedName>
    <alternativeName>
        <fullName evidence="1">GTP-binding protein Obg</fullName>
    </alternativeName>
</protein>
<evidence type="ECO:0000255" key="1">
    <source>
        <dbReference type="HAMAP-Rule" id="MF_01454"/>
    </source>
</evidence>
<evidence type="ECO:0000255" key="2">
    <source>
        <dbReference type="PROSITE-ProRule" id="PRU01229"/>
    </source>
</evidence>
<evidence type="ECO:0000255" key="3">
    <source>
        <dbReference type="PROSITE-ProRule" id="PRU01231"/>
    </source>
</evidence>
<feature type="chain" id="PRO_0000385837" description="GTPase Obg">
    <location>
        <begin position="1"/>
        <end position="424"/>
    </location>
</feature>
<feature type="domain" description="Obg" evidence="3">
    <location>
        <begin position="1"/>
        <end position="158"/>
    </location>
</feature>
<feature type="domain" description="OBG-type G" evidence="1">
    <location>
        <begin position="159"/>
        <end position="331"/>
    </location>
</feature>
<feature type="domain" description="OCT" evidence="2">
    <location>
        <begin position="345"/>
        <end position="424"/>
    </location>
</feature>
<feature type="binding site" evidence="1">
    <location>
        <begin position="165"/>
        <end position="172"/>
    </location>
    <ligand>
        <name>GTP</name>
        <dbReference type="ChEBI" id="CHEBI:37565"/>
    </ligand>
</feature>
<feature type="binding site" evidence="1">
    <location>
        <position position="172"/>
    </location>
    <ligand>
        <name>Mg(2+)</name>
        <dbReference type="ChEBI" id="CHEBI:18420"/>
    </ligand>
</feature>
<feature type="binding site" evidence="1">
    <location>
        <begin position="190"/>
        <end position="194"/>
    </location>
    <ligand>
        <name>GTP</name>
        <dbReference type="ChEBI" id="CHEBI:37565"/>
    </ligand>
</feature>
<feature type="binding site" evidence="1">
    <location>
        <position position="192"/>
    </location>
    <ligand>
        <name>Mg(2+)</name>
        <dbReference type="ChEBI" id="CHEBI:18420"/>
    </ligand>
</feature>
<feature type="binding site" evidence="1">
    <location>
        <begin position="212"/>
        <end position="215"/>
    </location>
    <ligand>
        <name>GTP</name>
        <dbReference type="ChEBI" id="CHEBI:37565"/>
    </ligand>
</feature>
<feature type="binding site" evidence="1">
    <location>
        <begin position="282"/>
        <end position="285"/>
    </location>
    <ligand>
        <name>GTP</name>
        <dbReference type="ChEBI" id="CHEBI:37565"/>
    </ligand>
</feature>
<feature type="binding site" evidence="1">
    <location>
        <begin position="312"/>
        <end position="314"/>
    </location>
    <ligand>
        <name>GTP</name>
        <dbReference type="ChEBI" id="CHEBI:37565"/>
    </ligand>
</feature>
<comment type="function">
    <text evidence="1">An essential GTPase which binds GTP, GDP and possibly (p)ppGpp with moderate affinity, with high nucleotide exchange rates and a fairly low GTP hydrolysis rate. Plays a role in control of the cell cycle, stress response, ribosome biogenesis and in those bacteria that undergo differentiation, in morphogenesis control.</text>
</comment>
<comment type="cofactor">
    <cofactor evidence="1">
        <name>Mg(2+)</name>
        <dbReference type="ChEBI" id="CHEBI:18420"/>
    </cofactor>
</comment>
<comment type="subunit">
    <text evidence="1">Monomer.</text>
</comment>
<comment type="subcellular location">
    <subcellularLocation>
        <location evidence="1">Cytoplasm</location>
    </subcellularLocation>
</comment>
<comment type="similarity">
    <text evidence="1">Belongs to the TRAFAC class OBG-HflX-like GTPase superfamily. OBG GTPase family.</text>
</comment>